<sequence length="53" mass="5723">MFRWGIIFLIIALIEAALGFGGLAGTAAWAAKVVFVVGIILFLISLFTGRKRL</sequence>
<name>Y303_YERPN</name>
<organism>
    <name type="scientific">Yersinia pestis bv. Antiqua (strain Nepal516)</name>
    <dbReference type="NCBI Taxonomy" id="377628"/>
    <lineage>
        <taxon>Bacteria</taxon>
        <taxon>Pseudomonadati</taxon>
        <taxon>Pseudomonadota</taxon>
        <taxon>Gammaproteobacteria</taxon>
        <taxon>Enterobacterales</taxon>
        <taxon>Yersiniaceae</taxon>
        <taxon>Yersinia</taxon>
    </lineage>
</organism>
<gene>
    <name type="ordered locus">YPN_0303</name>
    <name type="ORF">YP516_0306</name>
</gene>
<protein>
    <recommendedName>
        <fullName evidence="1">UPF0391 membrane protein YPN_0303</fullName>
    </recommendedName>
</protein>
<keyword id="KW-1003">Cell membrane</keyword>
<keyword id="KW-0472">Membrane</keyword>
<keyword id="KW-0812">Transmembrane</keyword>
<keyword id="KW-1133">Transmembrane helix</keyword>
<reference key="1">
    <citation type="journal article" date="2006" name="J. Bacteriol.">
        <title>Complete genome sequence of Yersinia pestis strains Antiqua and Nepal516: evidence of gene reduction in an emerging pathogen.</title>
        <authorList>
            <person name="Chain P.S.G."/>
            <person name="Hu P."/>
            <person name="Malfatti S.A."/>
            <person name="Radnedge L."/>
            <person name="Larimer F."/>
            <person name="Vergez L.M."/>
            <person name="Worsham P."/>
            <person name="Chu M.C."/>
            <person name="Andersen G.L."/>
        </authorList>
    </citation>
    <scope>NUCLEOTIDE SEQUENCE [LARGE SCALE GENOMIC DNA]</scope>
    <source>
        <strain>Nepal516</strain>
    </source>
</reference>
<reference key="2">
    <citation type="submission" date="2009-04" db="EMBL/GenBank/DDBJ databases">
        <title>Yersinia pestis Nepal516A whole genome shotgun sequencing project.</title>
        <authorList>
            <person name="Plunkett G. III"/>
            <person name="Anderson B.D."/>
            <person name="Baumler D.J."/>
            <person name="Burland V."/>
            <person name="Cabot E.L."/>
            <person name="Glasner J.D."/>
            <person name="Mau B."/>
            <person name="Neeno-Eckwall E."/>
            <person name="Perna N.T."/>
            <person name="Munk A.C."/>
            <person name="Tapia R."/>
            <person name="Green L.D."/>
            <person name="Rogers Y.C."/>
            <person name="Detter J.C."/>
            <person name="Bruce D.C."/>
            <person name="Brettin T.S."/>
        </authorList>
    </citation>
    <scope>NUCLEOTIDE SEQUENCE [LARGE SCALE GENOMIC DNA]</scope>
    <source>
        <strain>Nepal516</strain>
    </source>
</reference>
<feature type="chain" id="PRO_0000256810" description="UPF0391 membrane protein YPN_0303">
    <location>
        <begin position="1"/>
        <end position="53"/>
    </location>
</feature>
<feature type="transmembrane region" description="Helical" evidence="1">
    <location>
        <begin position="4"/>
        <end position="24"/>
    </location>
</feature>
<feature type="transmembrane region" description="Helical" evidence="1">
    <location>
        <begin position="27"/>
        <end position="47"/>
    </location>
</feature>
<dbReference type="EMBL" id="CP000305">
    <property type="protein sequence ID" value="ABG16635.1"/>
    <property type="molecule type" value="Genomic_DNA"/>
</dbReference>
<dbReference type="EMBL" id="ACNQ01000006">
    <property type="protein sequence ID" value="EEO78087.1"/>
    <property type="molecule type" value="Genomic_DNA"/>
</dbReference>
<dbReference type="RefSeq" id="WP_002209211.1">
    <property type="nucleotide sequence ID" value="NZ_ACNQ01000006.1"/>
</dbReference>
<dbReference type="KEGG" id="ypn:YPN_0303"/>
<dbReference type="HOGENOM" id="CLU_187346_2_0_6"/>
<dbReference type="Proteomes" id="UP000008936">
    <property type="component" value="Chromosome"/>
</dbReference>
<dbReference type="GO" id="GO:0005886">
    <property type="term" value="C:plasma membrane"/>
    <property type="evidence" value="ECO:0007669"/>
    <property type="project" value="UniProtKB-SubCell"/>
</dbReference>
<dbReference type="HAMAP" id="MF_01361">
    <property type="entry name" value="UPF0391"/>
    <property type="match status" value="1"/>
</dbReference>
<dbReference type="InterPro" id="IPR009760">
    <property type="entry name" value="DUF1328"/>
</dbReference>
<dbReference type="NCBIfam" id="NF010229">
    <property type="entry name" value="PRK13682.1-4"/>
    <property type="match status" value="1"/>
</dbReference>
<dbReference type="NCBIfam" id="NF010230">
    <property type="entry name" value="PRK13682.1-5"/>
    <property type="match status" value="1"/>
</dbReference>
<dbReference type="Pfam" id="PF07043">
    <property type="entry name" value="DUF1328"/>
    <property type="match status" value="1"/>
</dbReference>
<dbReference type="PIRSF" id="PIRSF036466">
    <property type="entry name" value="UCP036466"/>
    <property type="match status" value="1"/>
</dbReference>
<accession>Q1CMZ5</accession>
<accession>C4GNK5</accession>
<evidence type="ECO:0000255" key="1">
    <source>
        <dbReference type="HAMAP-Rule" id="MF_01361"/>
    </source>
</evidence>
<comment type="subcellular location">
    <subcellularLocation>
        <location evidence="1">Cell membrane</location>
        <topology evidence="1">Multi-pass membrane protein</topology>
    </subcellularLocation>
</comment>
<comment type="similarity">
    <text evidence="1">Belongs to the UPF0391 family.</text>
</comment>
<proteinExistence type="inferred from homology"/>